<name>BT2_ARATH</name>
<evidence type="ECO:0000250" key="1"/>
<evidence type="ECO:0000255" key="2"/>
<evidence type="ECO:0000255" key="3">
    <source>
        <dbReference type="PROSITE-ProRule" id="PRU00037"/>
    </source>
</evidence>
<evidence type="ECO:0000269" key="4">
    <source>
    </source>
</evidence>
<evidence type="ECO:0000269" key="5">
    <source>
    </source>
</evidence>
<evidence type="ECO:0000269" key="6">
    <source>
    </source>
</evidence>
<evidence type="ECO:0000269" key="7">
    <source>
    </source>
</evidence>
<evidence type="ECO:0000269" key="8">
    <source>
    </source>
</evidence>
<evidence type="ECO:0000269" key="9">
    <source>
    </source>
</evidence>
<evidence type="ECO:0000305" key="10"/>
<proteinExistence type="evidence at protein level"/>
<dbReference type="EMBL" id="AY316675">
    <property type="protein sequence ID" value="AAQ87005.1"/>
    <property type="molecule type" value="mRNA"/>
</dbReference>
<dbReference type="EMBL" id="AL049659">
    <property type="protein sequence ID" value="CAB41162.1"/>
    <property type="status" value="ALT_SEQ"/>
    <property type="molecule type" value="Genomic_DNA"/>
</dbReference>
<dbReference type="EMBL" id="CP002686">
    <property type="protein sequence ID" value="AEE78407.1"/>
    <property type="molecule type" value="Genomic_DNA"/>
</dbReference>
<dbReference type="EMBL" id="AY040015">
    <property type="protein sequence ID" value="AAK64172.1"/>
    <property type="molecule type" value="mRNA"/>
</dbReference>
<dbReference type="EMBL" id="AY079408">
    <property type="protein sequence ID" value="AAL85139.1"/>
    <property type="molecule type" value="mRNA"/>
</dbReference>
<dbReference type="EMBL" id="BT000678">
    <property type="protein sequence ID" value="AAN31824.1"/>
    <property type="molecule type" value="mRNA"/>
</dbReference>
<dbReference type="EMBL" id="AK226596">
    <property type="protein sequence ID" value="BAE98711.1"/>
    <property type="molecule type" value="mRNA"/>
</dbReference>
<dbReference type="PIR" id="T06706">
    <property type="entry name" value="T06706"/>
</dbReference>
<dbReference type="RefSeq" id="NP_566902.1">
    <property type="nucleotide sequence ID" value="NM_114697.4"/>
</dbReference>
<dbReference type="SMR" id="Q94BN0"/>
<dbReference type="BioGRID" id="9313">
    <property type="interactions" value="6"/>
</dbReference>
<dbReference type="FunCoup" id="Q94BN0">
    <property type="interactions" value="12"/>
</dbReference>
<dbReference type="IntAct" id="Q94BN0">
    <property type="interactions" value="7"/>
</dbReference>
<dbReference type="STRING" id="3702.Q94BN0"/>
<dbReference type="PaxDb" id="3702-AT3G48360.1"/>
<dbReference type="ProteomicsDB" id="240363"/>
<dbReference type="EnsemblPlants" id="AT3G48360.1">
    <property type="protein sequence ID" value="AT3G48360.1"/>
    <property type="gene ID" value="AT3G48360"/>
</dbReference>
<dbReference type="GeneID" id="823994"/>
<dbReference type="Gramene" id="AT3G48360.1">
    <property type="protein sequence ID" value="AT3G48360.1"/>
    <property type="gene ID" value="AT3G48360"/>
</dbReference>
<dbReference type="KEGG" id="ath:AT3G48360"/>
<dbReference type="Araport" id="AT3G48360"/>
<dbReference type="TAIR" id="AT3G48360">
    <property type="gene designation" value="BT2"/>
</dbReference>
<dbReference type="eggNOG" id="KOG1778">
    <property type="taxonomic scope" value="Eukaryota"/>
</dbReference>
<dbReference type="HOGENOM" id="CLU_037906_0_0_1"/>
<dbReference type="InParanoid" id="Q94BN0"/>
<dbReference type="PhylomeDB" id="Q94BN0"/>
<dbReference type="UniPathway" id="UPA00143"/>
<dbReference type="PRO" id="PR:Q94BN0"/>
<dbReference type="Proteomes" id="UP000006548">
    <property type="component" value="Chromosome 3"/>
</dbReference>
<dbReference type="ExpressionAtlas" id="Q94BN0">
    <property type="expression patterns" value="baseline and differential"/>
</dbReference>
<dbReference type="GO" id="GO:0005737">
    <property type="term" value="C:cytoplasm"/>
    <property type="evidence" value="ECO:0000314"/>
    <property type="project" value="TAIR"/>
</dbReference>
<dbReference type="GO" id="GO:0005634">
    <property type="term" value="C:nucleus"/>
    <property type="evidence" value="ECO:0000314"/>
    <property type="project" value="TAIR"/>
</dbReference>
<dbReference type="GO" id="GO:0005516">
    <property type="term" value="F:calmodulin binding"/>
    <property type="evidence" value="ECO:0000314"/>
    <property type="project" value="UniProtKB"/>
</dbReference>
<dbReference type="GO" id="GO:0008270">
    <property type="term" value="F:zinc ion binding"/>
    <property type="evidence" value="ECO:0007669"/>
    <property type="project" value="UniProtKB-KW"/>
</dbReference>
<dbReference type="GO" id="GO:0009738">
    <property type="term" value="P:abscisic acid-activated signaling pathway"/>
    <property type="evidence" value="ECO:0000315"/>
    <property type="project" value="UniProtKB"/>
</dbReference>
<dbReference type="GO" id="GO:0009734">
    <property type="term" value="P:auxin-activated signaling pathway"/>
    <property type="evidence" value="ECO:0000315"/>
    <property type="project" value="UniProtKB"/>
</dbReference>
<dbReference type="GO" id="GO:0007623">
    <property type="term" value="P:circadian rhythm"/>
    <property type="evidence" value="ECO:0000270"/>
    <property type="project" value="TAIR"/>
</dbReference>
<dbReference type="GO" id="GO:0009553">
    <property type="term" value="P:embryo sac development"/>
    <property type="evidence" value="ECO:0000316"/>
    <property type="project" value="TAIR"/>
</dbReference>
<dbReference type="GO" id="GO:0009555">
    <property type="term" value="P:pollen development"/>
    <property type="evidence" value="ECO:0000316"/>
    <property type="project" value="TAIR"/>
</dbReference>
<dbReference type="GO" id="GO:0016567">
    <property type="term" value="P:protein ubiquitination"/>
    <property type="evidence" value="ECO:0007669"/>
    <property type="project" value="UniProtKB-UniPathway"/>
</dbReference>
<dbReference type="GO" id="GO:0006355">
    <property type="term" value="P:regulation of DNA-templated transcription"/>
    <property type="evidence" value="ECO:0000304"/>
    <property type="project" value="TAIR"/>
</dbReference>
<dbReference type="GO" id="GO:0009737">
    <property type="term" value="P:response to abscisic acid"/>
    <property type="evidence" value="ECO:0000270"/>
    <property type="project" value="UniProtKB"/>
</dbReference>
<dbReference type="GO" id="GO:0009733">
    <property type="term" value="P:response to auxin"/>
    <property type="evidence" value="ECO:0000270"/>
    <property type="project" value="TAIR"/>
</dbReference>
<dbReference type="GO" id="GO:0009743">
    <property type="term" value="P:response to carbohydrate"/>
    <property type="evidence" value="ECO:0000270"/>
    <property type="project" value="TAIR"/>
</dbReference>
<dbReference type="GO" id="GO:0009409">
    <property type="term" value="P:response to cold"/>
    <property type="evidence" value="ECO:0000270"/>
    <property type="project" value="UniProtKB"/>
</dbReference>
<dbReference type="GO" id="GO:0042542">
    <property type="term" value="P:response to hydrogen peroxide"/>
    <property type="evidence" value="ECO:0000270"/>
    <property type="project" value="UniProtKB"/>
</dbReference>
<dbReference type="GO" id="GO:0009753">
    <property type="term" value="P:response to jasmonic acid"/>
    <property type="evidence" value="ECO:0000270"/>
    <property type="project" value="UniProtKB"/>
</dbReference>
<dbReference type="GO" id="GO:0010167">
    <property type="term" value="P:response to nitrate"/>
    <property type="evidence" value="ECO:0000270"/>
    <property type="project" value="TAIR"/>
</dbReference>
<dbReference type="GO" id="GO:0009751">
    <property type="term" value="P:response to salicylic acid"/>
    <property type="evidence" value="ECO:0000270"/>
    <property type="project" value="UniProtKB"/>
</dbReference>
<dbReference type="GO" id="GO:0009651">
    <property type="term" value="P:response to salt stress"/>
    <property type="evidence" value="ECO:0000270"/>
    <property type="project" value="UniProtKB"/>
</dbReference>
<dbReference type="GO" id="GO:0009611">
    <property type="term" value="P:response to wounding"/>
    <property type="evidence" value="ECO:0000270"/>
    <property type="project" value="UniProtKB"/>
</dbReference>
<dbReference type="GO" id="GO:0010182">
    <property type="term" value="P:sugar mediated signaling pathway"/>
    <property type="evidence" value="ECO:0000315"/>
    <property type="project" value="UniProtKB"/>
</dbReference>
<dbReference type="CDD" id="cd18313">
    <property type="entry name" value="BTB_POZ_BT"/>
    <property type="match status" value="1"/>
</dbReference>
<dbReference type="FunFam" id="1.20.1020.10:FF:000007">
    <property type="entry name" value="BTB/POZ and TAZ domain-containing protein 2"/>
    <property type="match status" value="1"/>
</dbReference>
<dbReference type="FunFam" id="1.25.40.420:FF:000012">
    <property type="entry name" value="BTB/POZ and TAZ domain-containing protein 2"/>
    <property type="match status" value="1"/>
</dbReference>
<dbReference type="FunFam" id="3.30.710.10:FF:000193">
    <property type="entry name" value="BTB/POZ and TAZ domain-containing protein 2"/>
    <property type="match status" value="1"/>
</dbReference>
<dbReference type="Gene3D" id="1.25.40.420">
    <property type="match status" value="1"/>
</dbReference>
<dbReference type="Gene3D" id="3.30.710.10">
    <property type="entry name" value="Potassium Channel Kv1.1, Chain A"/>
    <property type="match status" value="1"/>
</dbReference>
<dbReference type="Gene3D" id="1.20.1020.10">
    <property type="entry name" value="TAZ domain"/>
    <property type="match status" value="1"/>
</dbReference>
<dbReference type="InterPro" id="IPR044513">
    <property type="entry name" value="BT1/2/3/4/5"/>
</dbReference>
<dbReference type="InterPro" id="IPR000210">
    <property type="entry name" value="BTB/POZ_dom"/>
</dbReference>
<dbReference type="InterPro" id="IPR011333">
    <property type="entry name" value="SKP1/BTB/POZ_sf"/>
</dbReference>
<dbReference type="InterPro" id="IPR035898">
    <property type="entry name" value="TAZ_dom_sf"/>
</dbReference>
<dbReference type="InterPro" id="IPR000197">
    <property type="entry name" value="Znf_TAZ"/>
</dbReference>
<dbReference type="PANTHER" id="PTHR46287">
    <property type="entry name" value="BTB/POZ AND TAZ DOMAIN-CONTAINING PROTEIN 3-RELATED"/>
    <property type="match status" value="1"/>
</dbReference>
<dbReference type="PANTHER" id="PTHR46287:SF4">
    <property type="entry name" value="BTB_POZ AND TAZ DOMAIN-CONTAINING PROTEIN 2"/>
    <property type="match status" value="1"/>
</dbReference>
<dbReference type="Pfam" id="PF00651">
    <property type="entry name" value="BTB"/>
    <property type="match status" value="1"/>
</dbReference>
<dbReference type="Pfam" id="PF02135">
    <property type="entry name" value="zf-TAZ"/>
    <property type="match status" value="1"/>
</dbReference>
<dbReference type="SMART" id="SM00225">
    <property type="entry name" value="BTB"/>
    <property type="match status" value="1"/>
</dbReference>
<dbReference type="SMART" id="SM00551">
    <property type="entry name" value="ZnF_TAZ"/>
    <property type="match status" value="1"/>
</dbReference>
<dbReference type="SUPFAM" id="SSF54695">
    <property type="entry name" value="POZ domain"/>
    <property type="match status" value="1"/>
</dbReference>
<dbReference type="SUPFAM" id="SSF57933">
    <property type="entry name" value="TAZ domain"/>
    <property type="match status" value="1"/>
</dbReference>
<dbReference type="PROSITE" id="PS50097">
    <property type="entry name" value="BTB"/>
    <property type="match status" value="1"/>
</dbReference>
<organism>
    <name type="scientific">Arabidopsis thaliana</name>
    <name type="common">Mouse-ear cress</name>
    <dbReference type="NCBI Taxonomy" id="3702"/>
    <lineage>
        <taxon>Eukaryota</taxon>
        <taxon>Viridiplantae</taxon>
        <taxon>Streptophyta</taxon>
        <taxon>Embryophyta</taxon>
        <taxon>Tracheophyta</taxon>
        <taxon>Spermatophyta</taxon>
        <taxon>Magnoliopsida</taxon>
        <taxon>eudicotyledons</taxon>
        <taxon>Gunneridae</taxon>
        <taxon>Pentapetalae</taxon>
        <taxon>rosids</taxon>
        <taxon>malvids</taxon>
        <taxon>Brassicales</taxon>
        <taxon>Brassicaceae</taxon>
        <taxon>Camelineae</taxon>
        <taxon>Arabidopsis</taxon>
    </lineage>
</organism>
<comment type="function">
    <text evidence="7 8 9">May act as a substrate-specific adapter of an E3 ubiquitin-protein ligase complex (CUL3-RBX1-BTB) which mediates the ubiquitination and subsequent proteasomal degradation of target proteins. Plays a key role as a component of the TAC1-mediated telomerase activation pathway certainly by targeting a telomerase repressor to degradation. Seems to occupy an integral position in a complex signaling network that perceives, integrates, and responds to multiple, and sometimes competing, signals. Enhances responses to auxin in postgermination and vegetative development. Also negatively regulates ABA- and sugar-mediated inhibition of the germination. Essential for female and male gametophyte development.</text>
</comment>
<comment type="pathway">
    <text>Protein modification; protein ubiquitination.</text>
</comment>
<comment type="subunit">
    <text evidence="4 6">Interacts with CUL3A. Interacts with GTE11/BET10 through the BTB domain.</text>
</comment>
<comment type="interaction">
    <interactant intactId="EBI-540986">
        <id>Q94BN0</id>
    </interactant>
    <interactant intactId="EBI-979321">
        <id>Q39016</id>
        <label>CPK11</label>
    </interactant>
    <organismsDiffer>false</organismsDiffer>
    <experiments>7</experiments>
</comment>
<comment type="interaction">
    <interactant intactId="EBI-540986">
        <id>Q94BN0</id>
    </interactant>
    <interactant intactId="EBI-979475">
        <id>Q38869</id>
        <label>CPK4</label>
    </interactant>
    <organismsDiffer>false</organismsDiffer>
    <experiments>7</experiments>
</comment>
<comment type="subcellular location">
    <subcellularLocation>
        <location evidence="8">Nucleus</location>
    </subcellularLocation>
    <subcellularLocation>
        <location evidence="8">Cytoplasm</location>
    </subcellularLocation>
</comment>
<comment type="tissue specificity">
    <text evidence="4 8">Preferentially expressed in young leaves and roots.</text>
</comment>
<comment type="induction">
    <text evidence="4 7 8 9">Up-regulated by auxin (IAA), methyl jasmonate (MeJA), hydrogen peroxide and nitrates. Down-regulated by salicylic acid (SA), abscisic acid (ABA), hydrogen peroxide, sugars, cold and NaCl. Positively regulated by the transcriptional factor TAC1. Circadian-regulation; expression increase during the dark phase and decrease during the light phase.</text>
</comment>
<comment type="domain">
    <text evidence="5">The BTB/POZ domain mediates the interaction with some component of ubiquitin ligase complexes.</text>
</comment>
<comment type="disruption phenotype">
    <text evidence="7 9">Altered response to auxin. Blocked ability of TAC1 to induce telomerase. Hypersensitive response to both sugar and abscisic acid (ABA)-mediated inhibition of germination.</text>
</comment>
<comment type="sequence caution" evidence="10">
    <conflict type="erroneous gene model prediction">
        <sequence resource="EMBL-CDS" id="CAB41162"/>
    </conflict>
</comment>
<keyword id="KW-0963">Cytoplasm</keyword>
<keyword id="KW-0479">Metal-binding</keyword>
<keyword id="KW-0539">Nucleus</keyword>
<keyword id="KW-1185">Reference proteome</keyword>
<keyword id="KW-0833">Ubl conjugation pathway</keyword>
<keyword id="KW-0862">Zinc</keyword>
<keyword id="KW-0863">Zinc-finger</keyword>
<feature type="chain" id="PRO_0000406143" description="BTB/POZ and TAZ domain-containing protein 2">
    <location>
        <begin position="1"/>
        <end position="364"/>
    </location>
</feature>
<feature type="domain" description="BTB" evidence="3">
    <location>
        <begin position="34"/>
        <end position="106"/>
    </location>
</feature>
<feature type="zinc finger region" description="TAZ-type">
    <location>
        <begin position="215"/>
        <end position="316"/>
    </location>
</feature>
<feature type="region of interest" description="CaM-binding" evidence="1">
    <location>
        <begin position="327"/>
        <end position="350"/>
    </location>
</feature>
<feature type="short sequence motif" description="Nuclear localization signal" evidence="2">
    <location>
        <begin position="203"/>
        <end position="212"/>
    </location>
</feature>
<gene>
    <name type="primary">BT2</name>
    <name type="ordered locus">At3g48360</name>
    <name type="ORF">T29H11.120</name>
</gene>
<sequence length="364" mass="41561">MEAVLVAMSVPATTEDDGFSLITDKLSYNLTPTSDVEIVTSDNRRIPAHSGVLASASPVLMNIMKKPMRRYRGCGSKRVIKILGVPCDAVSVFIKFLYSSSLTEDEMERYGIHLLALSHVYMVTQLKQRCSKGVVQRLTTENVVDVLQLARLCDAPDVCLRSMRLIHSQFKTVEQTEGWKFIQEHDPFLELDILQFIDDAESRKKRRRRHRKEQDLYMQLSEAMECIEHICTQGCTLVGPSNVVDNNKKSMTAEKSEPCKAFSTCYGLQLLIRHFAVCKRRNNDKGCLRCKRMLQLFRLHSLICDQPDSCRVPLCRQFRKRGEQDKKMGEDTKWKLLVTRVVSAKAMTSLCQSKKNKCEQAQGV</sequence>
<accession>Q94BN0</accession>
<accession>Q9STL6</accession>
<protein>
    <recommendedName>
        <fullName>BTB/POZ and TAZ domain-containing protein 2</fullName>
    </recommendedName>
    <alternativeName>
        <fullName>BTB and TAZ domain protein 2</fullName>
    </alternativeName>
</protein>
<reference key="1">
    <citation type="journal article" date="2004" name="Plant Mol. Biol.">
        <title>A novel family of Ca2+/calmodulin-binding proteins involved in transcriptional regulation: interaction with fsh/Ring3 class transcription activators.</title>
        <authorList>
            <person name="Du L."/>
            <person name="Poovaiah B.W."/>
        </authorList>
    </citation>
    <scope>NUCLEOTIDE SEQUENCE [MRNA]</scope>
    <scope>GENE FAMILY</scope>
    <scope>NOMENCLATURE</scope>
    <scope>INTERACTION WITH GTE11</scope>
    <scope>TISSUE SPECIFICITY</scope>
    <scope>INDUCTION</scope>
    <source>
        <strain>cv. Columbia</strain>
    </source>
</reference>
<reference key="2">
    <citation type="journal article" date="2000" name="Nature">
        <title>Sequence and analysis of chromosome 3 of the plant Arabidopsis thaliana.</title>
        <authorList>
            <person name="Salanoubat M."/>
            <person name="Lemcke K."/>
            <person name="Rieger M."/>
            <person name="Ansorge W."/>
            <person name="Unseld M."/>
            <person name="Fartmann B."/>
            <person name="Valle G."/>
            <person name="Bloecker H."/>
            <person name="Perez-Alonso M."/>
            <person name="Obermaier B."/>
            <person name="Delseny M."/>
            <person name="Boutry M."/>
            <person name="Grivell L.A."/>
            <person name="Mache R."/>
            <person name="Puigdomenech P."/>
            <person name="De Simone V."/>
            <person name="Choisne N."/>
            <person name="Artiguenave F."/>
            <person name="Robert C."/>
            <person name="Brottier P."/>
            <person name="Wincker P."/>
            <person name="Cattolico L."/>
            <person name="Weissenbach J."/>
            <person name="Saurin W."/>
            <person name="Quetier F."/>
            <person name="Schaefer M."/>
            <person name="Mueller-Auer S."/>
            <person name="Gabel C."/>
            <person name="Fuchs M."/>
            <person name="Benes V."/>
            <person name="Wurmbach E."/>
            <person name="Drzonek H."/>
            <person name="Erfle H."/>
            <person name="Jordan N."/>
            <person name="Bangert S."/>
            <person name="Wiedelmann R."/>
            <person name="Kranz H."/>
            <person name="Voss H."/>
            <person name="Holland R."/>
            <person name="Brandt P."/>
            <person name="Nyakatura G."/>
            <person name="Vezzi A."/>
            <person name="D'Angelo M."/>
            <person name="Pallavicini A."/>
            <person name="Toppo S."/>
            <person name="Simionati B."/>
            <person name="Conrad A."/>
            <person name="Hornischer K."/>
            <person name="Kauer G."/>
            <person name="Loehnert T.-H."/>
            <person name="Nordsiek G."/>
            <person name="Reichelt J."/>
            <person name="Scharfe M."/>
            <person name="Schoen O."/>
            <person name="Bargues M."/>
            <person name="Terol J."/>
            <person name="Climent J."/>
            <person name="Navarro P."/>
            <person name="Collado C."/>
            <person name="Perez-Perez A."/>
            <person name="Ottenwaelder B."/>
            <person name="Duchemin D."/>
            <person name="Cooke R."/>
            <person name="Laudie M."/>
            <person name="Berger-Llauro C."/>
            <person name="Purnelle B."/>
            <person name="Masuy D."/>
            <person name="de Haan M."/>
            <person name="Maarse A.C."/>
            <person name="Alcaraz J.-P."/>
            <person name="Cottet A."/>
            <person name="Casacuberta E."/>
            <person name="Monfort A."/>
            <person name="Argiriou A."/>
            <person name="Flores M."/>
            <person name="Liguori R."/>
            <person name="Vitale D."/>
            <person name="Mannhaupt G."/>
            <person name="Haase D."/>
            <person name="Schoof H."/>
            <person name="Rudd S."/>
            <person name="Zaccaria P."/>
            <person name="Mewes H.-W."/>
            <person name="Mayer K.F.X."/>
            <person name="Kaul S."/>
            <person name="Town C.D."/>
            <person name="Koo H.L."/>
            <person name="Tallon L.J."/>
            <person name="Jenkins J."/>
            <person name="Rooney T."/>
            <person name="Rizzo M."/>
            <person name="Walts A."/>
            <person name="Utterback T."/>
            <person name="Fujii C.Y."/>
            <person name="Shea T.P."/>
            <person name="Creasy T.H."/>
            <person name="Haas B."/>
            <person name="Maiti R."/>
            <person name="Wu D."/>
            <person name="Peterson J."/>
            <person name="Van Aken S."/>
            <person name="Pai G."/>
            <person name="Militscher J."/>
            <person name="Sellers P."/>
            <person name="Gill J.E."/>
            <person name="Feldblyum T.V."/>
            <person name="Preuss D."/>
            <person name="Lin X."/>
            <person name="Nierman W.C."/>
            <person name="Salzberg S.L."/>
            <person name="White O."/>
            <person name="Venter J.C."/>
            <person name="Fraser C.M."/>
            <person name="Kaneko T."/>
            <person name="Nakamura Y."/>
            <person name="Sato S."/>
            <person name="Kato T."/>
            <person name="Asamizu E."/>
            <person name="Sasamoto S."/>
            <person name="Kimura T."/>
            <person name="Idesawa K."/>
            <person name="Kawashima K."/>
            <person name="Kishida Y."/>
            <person name="Kiyokawa C."/>
            <person name="Kohara M."/>
            <person name="Matsumoto M."/>
            <person name="Matsuno A."/>
            <person name="Muraki A."/>
            <person name="Nakayama S."/>
            <person name="Nakazaki N."/>
            <person name="Shinpo S."/>
            <person name="Takeuchi C."/>
            <person name="Wada T."/>
            <person name="Watanabe A."/>
            <person name="Yamada M."/>
            <person name="Yasuda M."/>
            <person name="Tabata S."/>
        </authorList>
    </citation>
    <scope>NUCLEOTIDE SEQUENCE [LARGE SCALE GENOMIC DNA]</scope>
    <source>
        <strain>cv. Columbia</strain>
    </source>
</reference>
<reference key="3">
    <citation type="journal article" date="2017" name="Plant J.">
        <title>Araport11: a complete reannotation of the Arabidopsis thaliana reference genome.</title>
        <authorList>
            <person name="Cheng C.Y."/>
            <person name="Krishnakumar V."/>
            <person name="Chan A.P."/>
            <person name="Thibaud-Nissen F."/>
            <person name="Schobel S."/>
            <person name="Town C.D."/>
        </authorList>
    </citation>
    <scope>GENOME REANNOTATION</scope>
    <source>
        <strain>cv. Columbia</strain>
    </source>
</reference>
<reference key="4">
    <citation type="journal article" date="2003" name="Science">
        <title>Empirical analysis of transcriptional activity in the Arabidopsis genome.</title>
        <authorList>
            <person name="Yamada K."/>
            <person name="Lim J."/>
            <person name="Dale J.M."/>
            <person name="Chen H."/>
            <person name="Shinn P."/>
            <person name="Palm C.J."/>
            <person name="Southwick A.M."/>
            <person name="Wu H.C."/>
            <person name="Kim C.J."/>
            <person name="Nguyen M."/>
            <person name="Pham P.K."/>
            <person name="Cheuk R.F."/>
            <person name="Karlin-Newmann G."/>
            <person name="Liu S.X."/>
            <person name="Lam B."/>
            <person name="Sakano H."/>
            <person name="Wu T."/>
            <person name="Yu G."/>
            <person name="Miranda M."/>
            <person name="Quach H.L."/>
            <person name="Tripp M."/>
            <person name="Chang C.H."/>
            <person name="Lee J.M."/>
            <person name="Toriumi M.J."/>
            <person name="Chan M.M."/>
            <person name="Tang C.C."/>
            <person name="Onodera C.S."/>
            <person name="Deng J.M."/>
            <person name="Akiyama K."/>
            <person name="Ansari Y."/>
            <person name="Arakawa T."/>
            <person name="Banh J."/>
            <person name="Banno F."/>
            <person name="Bowser L."/>
            <person name="Brooks S.Y."/>
            <person name="Carninci P."/>
            <person name="Chao Q."/>
            <person name="Choy N."/>
            <person name="Enju A."/>
            <person name="Goldsmith A.D."/>
            <person name="Gurjal M."/>
            <person name="Hansen N.F."/>
            <person name="Hayashizaki Y."/>
            <person name="Johnson-Hopson C."/>
            <person name="Hsuan V.W."/>
            <person name="Iida K."/>
            <person name="Karnes M."/>
            <person name="Khan S."/>
            <person name="Koesema E."/>
            <person name="Ishida J."/>
            <person name="Jiang P.X."/>
            <person name="Jones T."/>
            <person name="Kawai J."/>
            <person name="Kamiya A."/>
            <person name="Meyers C."/>
            <person name="Nakajima M."/>
            <person name="Narusaka M."/>
            <person name="Seki M."/>
            <person name="Sakurai T."/>
            <person name="Satou M."/>
            <person name="Tamse R."/>
            <person name="Vaysberg M."/>
            <person name="Wallender E.K."/>
            <person name="Wong C."/>
            <person name="Yamamura Y."/>
            <person name="Yuan S."/>
            <person name="Shinozaki K."/>
            <person name="Davis R.W."/>
            <person name="Theologis A."/>
            <person name="Ecker J.R."/>
        </authorList>
    </citation>
    <scope>NUCLEOTIDE SEQUENCE [LARGE SCALE MRNA]</scope>
    <source>
        <strain>cv. Columbia</strain>
    </source>
</reference>
<reference key="5">
    <citation type="submission" date="2006-07" db="EMBL/GenBank/DDBJ databases">
        <title>Large-scale analysis of RIKEN Arabidopsis full-length (RAFL) cDNAs.</title>
        <authorList>
            <person name="Totoki Y."/>
            <person name="Seki M."/>
            <person name="Ishida J."/>
            <person name="Nakajima M."/>
            <person name="Enju A."/>
            <person name="Kamiya A."/>
            <person name="Narusaka M."/>
            <person name="Shin-i T."/>
            <person name="Nakagawa M."/>
            <person name="Sakamoto N."/>
            <person name="Oishi K."/>
            <person name="Kohara Y."/>
            <person name="Kobayashi M."/>
            <person name="Toyoda A."/>
            <person name="Sakaki Y."/>
            <person name="Sakurai T."/>
            <person name="Iida K."/>
            <person name="Akiyama K."/>
            <person name="Satou M."/>
            <person name="Toyoda T."/>
            <person name="Konagaya A."/>
            <person name="Carninci P."/>
            <person name="Kawai J."/>
            <person name="Hayashizaki Y."/>
            <person name="Shinozaki K."/>
        </authorList>
    </citation>
    <scope>NUCLEOTIDE SEQUENCE [LARGE SCALE MRNA]</scope>
    <source>
        <strain>cv. Columbia</strain>
    </source>
</reference>
<reference key="6">
    <citation type="journal article" date="2005" name="J. Biol. Chem.">
        <title>Cullins 3a and 3b assemble with members of the broad complex/tramtrack/bric-a-brac (BTB) protein family to form essential ubiquitin-protein ligases (E3s) in Arabidopsis.</title>
        <authorList>
            <person name="Gingerich D.J."/>
            <person name="Gagne J.M."/>
            <person name="Salter D.W."/>
            <person name="Hellmann H."/>
            <person name="Estelle M."/>
            <person name="Ma L."/>
            <person name="Vierstra R.D."/>
        </authorList>
    </citation>
    <scope>DOMAIN BTB</scope>
</reference>
<reference key="7">
    <citation type="journal article" date="2005" name="Plant Cell">
        <title>Arabidopsis has two redundant Cullin3 proteins that are essential for embryo development and that interact with RBX1 and BTB proteins to form multisubunit E3 ubiquitin ligase complexes in vivo.</title>
        <authorList>
            <person name="Figueroa P."/>
            <person name="Gusmaroli G."/>
            <person name="Serino G."/>
            <person name="Habashi J."/>
            <person name="Ma L."/>
            <person name="Shen Y."/>
            <person name="Feng S."/>
            <person name="Bostick M."/>
            <person name="Callis J."/>
            <person name="Hellmann H."/>
            <person name="Deng X.W."/>
        </authorList>
    </citation>
    <scope>INTERACTION WITH CUL3A</scope>
</reference>
<reference key="8">
    <citation type="journal article" date="2007" name="Plant Cell">
        <title>Regulation of telomerase in Arabidopsis by BT2, an apparent target of TELOMERASE ACTIVATOR1.</title>
        <authorList>
            <person name="Ren S."/>
            <person name="Mandadi K.K."/>
            <person name="Boedeker A.L."/>
            <person name="Rathore K.S."/>
            <person name="McKnight T.D."/>
        </authorList>
    </citation>
    <scope>FUNCTION</scope>
    <scope>INDUCTION</scope>
    <scope>DISRUPTION PHENOTYPE</scope>
    <scope>INDUCTION BY AUXIN</scope>
</reference>
<reference key="9">
    <citation type="journal article" date="2009" name="Plant J.">
        <title>BTB and TAZ DOMAIN scaffold proteins perform a crucial function in Arabidopsis development.</title>
        <authorList>
            <person name="Robert H.S."/>
            <person name="Quint A."/>
            <person name="Brand D."/>
            <person name="Vivian-Smith A."/>
            <person name="Offringa R."/>
        </authorList>
    </citation>
    <scope>FUNCTION</scope>
    <scope>SUBCELLULAR LOCATION</scope>
    <scope>INDUCTION BY AUXIN</scope>
    <scope>TISSUE SPECIFICITY</scope>
</reference>
<reference key="10">
    <citation type="journal article" date="2009" name="Plant Physiol.">
        <title>BT2, a BTB protein, mediates multiple responses to nutrients, stresses, and hormones in Arabidopsis.</title>
        <authorList>
            <person name="Mandadi K.K."/>
            <person name="Misra A."/>
            <person name="Ren S."/>
            <person name="McKnight T.D."/>
        </authorList>
    </citation>
    <scope>FUNCTION</scope>
    <scope>DISRUPTION PHENOTYPE</scope>
    <scope>INDUCTION</scope>
</reference>